<comment type="function">
    <text evidence="3">Contributes to the release of free fatty acids from fatty acid synthase (FASN). Has broad substrate specificity, giving rise to a range of free fatty acids with chain lengths between 10 and 16 carbon atoms (C10 - C16).</text>
</comment>
<comment type="catalytic activity">
    <reaction evidence="3">
        <text>(9Z)-octadecenoyl-[ACP] + H2O = (9Z)-octadecenoate + holo-[ACP] + H(+)</text>
        <dbReference type="Rhea" id="RHEA:15057"/>
        <dbReference type="Rhea" id="RHEA-COMP:9685"/>
        <dbReference type="Rhea" id="RHEA-COMP:9924"/>
        <dbReference type="ChEBI" id="CHEBI:15377"/>
        <dbReference type="ChEBI" id="CHEBI:15378"/>
        <dbReference type="ChEBI" id="CHEBI:30823"/>
        <dbReference type="ChEBI" id="CHEBI:64479"/>
        <dbReference type="ChEBI" id="CHEBI:78783"/>
        <dbReference type="EC" id="3.1.2.14"/>
    </reaction>
</comment>
<comment type="catalytic activity">
    <reaction evidence="1">
        <text>decanoyl-CoA + H2O = decanoate + CoA + H(+)</text>
        <dbReference type="Rhea" id="RHEA:40059"/>
        <dbReference type="ChEBI" id="CHEBI:15377"/>
        <dbReference type="ChEBI" id="CHEBI:15378"/>
        <dbReference type="ChEBI" id="CHEBI:27689"/>
        <dbReference type="ChEBI" id="CHEBI:57287"/>
        <dbReference type="ChEBI" id="CHEBI:61430"/>
    </reaction>
    <physiologicalReaction direction="left-to-right" evidence="1">
        <dbReference type="Rhea" id="RHEA:40060"/>
    </physiologicalReaction>
</comment>
<comment type="catalytic activity">
    <reaction evidence="1">
        <text>dodecanoyl-CoA + H2O = dodecanoate + CoA + H(+)</text>
        <dbReference type="Rhea" id="RHEA:30135"/>
        <dbReference type="ChEBI" id="CHEBI:15377"/>
        <dbReference type="ChEBI" id="CHEBI:15378"/>
        <dbReference type="ChEBI" id="CHEBI:18262"/>
        <dbReference type="ChEBI" id="CHEBI:57287"/>
        <dbReference type="ChEBI" id="CHEBI:57375"/>
    </reaction>
    <physiologicalReaction direction="left-to-right" evidence="1">
        <dbReference type="Rhea" id="RHEA:30136"/>
    </physiologicalReaction>
</comment>
<comment type="catalytic activity">
    <reaction evidence="1">
        <text>tetradecanoyl-CoA + H2O = tetradecanoate + CoA + H(+)</text>
        <dbReference type="Rhea" id="RHEA:40119"/>
        <dbReference type="ChEBI" id="CHEBI:15377"/>
        <dbReference type="ChEBI" id="CHEBI:15378"/>
        <dbReference type="ChEBI" id="CHEBI:30807"/>
        <dbReference type="ChEBI" id="CHEBI:57287"/>
        <dbReference type="ChEBI" id="CHEBI:57385"/>
    </reaction>
    <physiologicalReaction direction="left-to-right" evidence="1">
        <dbReference type="Rhea" id="RHEA:40120"/>
    </physiologicalReaction>
</comment>
<comment type="catalytic activity">
    <reaction evidence="1">
        <text>hexadecanoyl-CoA + H2O = hexadecanoate + CoA + H(+)</text>
        <dbReference type="Rhea" id="RHEA:16645"/>
        <dbReference type="ChEBI" id="CHEBI:7896"/>
        <dbReference type="ChEBI" id="CHEBI:15377"/>
        <dbReference type="ChEBI" id="CHEBI:15378"/>
        <dbReference type="ChEBI" id="CHEBI:57287"/>
        <dbReference type="ChEBI" id="CHEBI:57379"/>
    </reaction>
    <physiologicalReaction direction="left-to-right" evidence="1">
        <dbReference type="Rhea" id="RHEA:16646"/>
    </physiologicalReaction>
</comment>
<comment type="subunit">
    <text evidence="1">Interacts (via C-terminus) with FASN.</text>
</comment>
<comment type="subcellular location">
    <subcellularLocation>
        <location evidence="1">Cytoplasm</location>
        <location evidence="1">Cytosol</location>
    </subcellularLocation>
</comment>
<comment type="alternative products">
    <event type="alternative splicing"/>
    <isoform>
        <id>Q9NV23-1</id>
        <name>1</name>
        <sequence type="displayed"/>
    </isoform>
    <isoform>
        <id>Q9NV23-2</id>
        <name>2</name>
        <sequence type="described" ref="VSP_040022"/>
    </isoform>
</comment>
<comment type="tissue specificity">
    <text evidence="2 4">Detected both in lactating and non-lactating breast epithelium (at protein level) (PubMed:6589427). Isoform 2 is up-regulated in bone marrow-derived mononuclear cells of rheumatoid arthritis patients (PubMed:17082220).</text>
</comment>
<comment type="similarity">
    <text evidence="7">Belongs to the thioesterase family.</text>
</comment>
<sequence length="265" mass="29931">MERGDQPKRTRNENIFNCLYKNPEATFKLICFPWMGGGSTHFAKWGQDTHDLLEVHSLRLPGRESRVEEPLENDISQLVDEVVCALQPVIQDKPFAFFGHSMGSYIAFRTALGLKENNQPEPLHLFLSSATPVHSKAWHRIPKDDELSEEQISHYLMEFGGTPKHFAEAKEFVKQCSPIIRADLNIVRSCTSNVPSKAVLSCDLTCFVGSEDIAKDMEAWKDVTSGNAKIYQLPGGHFYLLDPANEKLIKNYIIKCLEVSSISNF</sequence>
<reference key="1">
    <citation type="journal article" date="2004" name="Nat. Genet.">
        <title>Complete sequencing and characterization of 21,243 full-length human cDNAs.</title>
        <authorList>
            <person name="Ota T."/>
            <person name="Suzuki Y."/>
            <person name="Nishikawa T."/>
            <person name="Otsuki T."/>
            <person name="Sugiyama T."/>
            <person name="Irie R."/>
            <person name="Wakamatsu A."/>
            <person name="Hayashi K."/>
            <person name="Sato H."/>
            <person name="Nagai K."/>
            <person name="Kimura K."/>
            <person name="Makita H."/>
            <person name="Sekine M."/>
            <person name="Obayashi M."/>
            <person name="Nishi T."/>
            <person name="Shibahara T."/>
            <person name="Tanaka T."/>
            <person name="Ishii S."/>
            <person name="Yamamoto J."/>
            <person name="Saito K."/>
            <person name="Kawai Y."/>
            <person name="Isono Y."/>
            <person name="Nakamura Y."/>
            <person name="Nagahari K."/>
            <person name="Murakami K."/>
            <person name="Yasuda T."/>
            <person name="Iwayanagi T."/>
            <person name="Wagatsuma M."/>
            <person name="Shiratori A."/>
            <person name="Sudo H."/>
            <person name="Hosoiri T."/>
            <person name="Kaku Y."/>
            <person name="Kodaira H."/>
            <person name="Kondo H."/>
            <person name="Sugawara M."/>
            <person name="Takahashi M."/>
            <person name="Kanda K."/>
            <person name="Yokoi T."/>
            <person name="Furuya T."/>
            <person name="Kikkawa E."/>
            <person name="Omura Y."/>
            <person name="Abe K."/>
            <person name="Kamihara K."/>
            <person name="Katsuta N."/>
            <person name="Sato K."/>
            <person name="Tanikawa M."/>
            <person name="Yamazaki M."/>
            <person name="Ninomiya K."/>
            <person name="Ishibashi T."/>
            <person name="Yamashita H."/>
            <person name="Murakawa K."/>
            <person name="Fujimori K."/>
            <person name="Tanai H."/>
            <person name="Kimata M."/>
            <person name="Watanabe M."/>
            <person name="Hiraoka S."/>
            <person name="Chiba Y."/>
            <person name="Ishida S."/>
            <person name="Ono Y."/>
            <person name="Takiguchi S."/>
            <person name="Watanabe S."/>
            <person name="Yosida M."/>
            <person name="Hotuta T."/>
            <person name="Kusano J."/>
            <person name="Kanehori K."/>
            <person name="Takahashi-Fujii A."/>
            <person name="Hara H."/>
            <person name="Tanase T.-O."/>
            <person name="Nomura Y."/>
            <person name="Togiya S."/>
            <person name="Komai F."/>
            <person name="Hara R."/>
            <person name="Takeuchi K."/>
            <person name="Arita M."/>
            <person name="Imose N."/>
            <person name="Musashino K."/>
            <person name="Yuuki H."/>
            <person name="Oshima A."/>
            <person name="Sasaki N."/>
            <person name="Aotsuka S."/>
            <person name="Yoshikawa Y."/>
            <person name="Matsunawa H."/>
            <person name="Ichihara T."/>
            <person name="Shiohata N."/>
            <person name="Sano S."/>
            <person name="Moriya S."/>
            <person name="Momiyama H."/>
            <person name="Satoh N."/>
            <person name="Takami S."/>
            <person name="Terashima Y."/>
            <person name="Suzuki O."/>
            <person name="Nakagawa S."/>
            <person name="Senoh A."/>
            <person name="Mizoguchi H."/>
            <person name="Goto Y."/>
            <person name="Shimizu F."/>
            <person name="Wakebe H."/>
            <person name="Hishigaki H."/>
            <person name="Watanabe T."/>
            <person name="Sugiyama A."/>
            <person name="Takemoto M."/>
            <person name="Kawakami B."/>
            <person name="Yamazaki M."/>
            <person name="Watanabe K."/>
            <person name="Kumagai A."/>
            <person name="Itakura S."/>
            <person name="Fukuzumi Y."/>
            <person name="Fujimori Y."/>
            <person name="Komiyama M."/>
            <person name="Tashiro H."/>
            <person name="Tanigami A."/>
            <person name="Fujiwara T."/>
            <person name="Ono T."/>
            <person name="Yamada K."/>
            <person name="Fujii Y."/>
            <person name="Ozaki K."/>
            <person name="Hirao M."/>
            <person name="Ohmori Y."/>
            <person name="Kawabata A."/>
            <person name="Hikiji T."/>
            <person name="Kobatake N."/>
            <person name="Inagaki H."/>
            <person name="Ikema Y."/>
            <person name="Okamoto S."/>
            <person name="Okitani R."/>
            <person name="Kawakami T."/>
            <person name="Noguchi S."/>
            <person name="Itoh T."/>
            <person name="Shigeta K."/>
            <person name="Senba T."/>
            <person name="Matsumura K."/>
            <person name="Nakajima Y."/>
            <person name="Mizuno T."/>
            <person name="Morinaga M."/>
            <person name="Sasaki M."/>
            <person name="Togashi T."/>
            <person name="Oyama M."/>
            <person name="Hata H."/>
            <person name="Watanabe M."/>
            <person name="Komatsu T."/>
            <person name="Mizushima-Sugano J."/>
            <person name="Satoh T."/>
            <person name="Shirai Y."/>
            <person name="Takahashi Y."/>
            <person name="Nakagawa K."/>
            <person name="Okumura K."/>
            <person name="Nagase T."/>
            <person name="Nomura N."/>
            <person name="Kikuchi H."/>
            <person name="Masuho Y."/>
            <person name="Yamashita R."/>
            <person name="Nakai K."/>
            <person name="Yada T."/>
            <person name="Nakamura Y."/>
            <person name="Ohara O."/>
            <person name="Isogai T."/>
            <person name="Sugano S."/>
        </authorList>
    </citation>
    <scope>NUCLEOTIDE SEQUENCE [LARGE SCALE MRNA] (ISOFORMS 1 AND 2)</scope>
    <source>
        <tissue>Placenta</tissue>
    </source>
</reference>
<reference key="2">
    <citation type="journal article" date="2004" name="Nature">
        <title>The DNA sequence and comparative analysis of human chromosome 10.</title>
        <authorList>
            <person name="Deloukas P."/>
            <person name="Earthrowl M.E."/>
            <person name="Grafham D.V."/>
            <person name="Rubenfield M."/>
            <person name="French L."/>
            <person name="Steward C.A."/>
            <person name="Sims S.K."/>
            <person name="Jones M.C."/>
            <person name="Searle S."/>
            <person name="Scott C."/>
            <person name="Howe K."/>
            <person name="Hunt S.E."/>
            <person name="Andrews T.D."/>
            <person name="Gilbert J.G.R."/>
            <person name="Swarbreck D."/>
            <person name="Ashurst J.L."/>
            <person name="Taylor A."/>
            <person name="Battles J."/>
            <person name="Bird C.P."/>
            <person name="Ainscough R."/>
            <person name="Almeida J.P."/>
            <person name="Ashwell R.I.S."/>
            <person name="Ambrose K.D."/>
            <person name="Babbage A.K."/>
            <person name="Bagguley C.L."/>
            <person name="Bailey J."/>
            <person name="Banerjee R."/>
            <person name="Bates K."/>
            <person name="Beasley H."/>
            <person name="Bray-Allen S."/>
            <person name="Brown A.J."/>
            <person name="Brown J.Y."/>
            <person name="Burford D.C."/>
            <person name="Burrill W."/>
            <person name="Burton J."/>
            <person name="Cahill P."/>
            <person name="Camire D."/>
            <person name="Carter N.P."/>
            <person name="Chapman J.C."/>
            <person name="Clark S.Y."/>
            <person name="Clarke G."/>
            <person name="Clee C.M."/>
            <person name="Clegg S."/>
            <person name="Corby N."/>
            <person name="Coulson A."/>
            <person name="Dhami P."/>
            <person name="Dutta I."/>
            <person name="Dunn M."/>
            <person name="Faulkner L."/>
            <person name="Frankish A."/>
            <person name="Frankland J.A."/>
            <person name="Garner P."/>
            <person name="Garnett J."/>
            <person name="Gribble S."/>
            <person name="Griffiths C."/>
            <person name="Grocock R."/>
            <person name="Gustafson E."/>
            <person name="Hammond S."/>
            <person name="Harley J.L."/>
            <person name="Hart E."/>
            <person name="Heath P.D."/>
            <person name="Ho T.P."/>
            <person name="Hopkins B."/>
            <person name="Horne J."/>
            <person name="Howden P.J."/>
            <person name="Huckle E."/>
            <person name="Hynds C."/>
            <person name="Johnson C."/>
            <person name="Johnson D."/>
            <person name="Kana A."/>
            <person name="Kay M."/>
            <person name="Kimberley A.M."/>
            <person name="Kershaw J.K."/>
            <person name="Kokkinaki M."/>
            <person name="Laird G.K."/>
            <person name="Lawlor S."/>
            <person name="Lee H.M."/>
            <person name="Leongamornlert D.A."/>
            <person name="Laird G."/>
            <person name="Lloyd C."/>
            <person name="Lloyd D.M."/>
            <person name="Loveland J."/>
            <person name="Lovell J."/>
            <person name="McLaren S."/>
            <person name="McLay K.E."/>
            <person name="McMurray A."/>
            <person name="Mashreghi-Mohammadi M."/>
            <person name="Matthews L."/>
            <person name="Milne S."/>
            <person name="Nickerson T."/>
            <person name="Nguyen M."/>
            <person name="Overton-Larty E."/>
            <person name="Palmer S.A."/>
            <person name="Pearce A.V."/>
            <person name="Peck A.I."/>
            <person name="Pelan S."/>
            <person name="Phillimore B."/>
            <person name="Porter K."/>
            <person name="Rice C.M."/>
            <person name="Rogosin A."/>
            <person name="Ross M.T."/>
            <person name="Sarafidou T."/>
            <person name="Sehra H.K."/>
            <person name="Shownkeen R."/>
            <person name="Skuce C.D."/>
            <person name="Smith M."/>
            <person name="Standring L."/>
            <person name="Sycamore N."/>
            <person name="Tester J."/>
            <person name="Thorpe A."/>
            <person name="Torcasso W."/>
            <person name="Tracey A."/>
            <person name="Tromans A."/>
            <person name="Tsolas J."/>
            <person name="Wall M."/>
            <person name="Walsh J."/>
            <person name="Wang H."/>
            <person name="Weinstock K."/>
            <person name="West A.P."/>
            <person name="Willey D.L."/>
            <person name="Whitehead S.L."/>
            <person name="Wilming L."/>
            <person name="Wray P.W."/>
            <person name="Young L."/>
            <person name="Chen Y."/>
            <person name="Lovering R.C."/>
            <person name="Moschonas N.K."/>
            <person name="Siebert R."/>
            <person name="Fechtel K."/>
            <person name="Bentley D."/>
            <person name="Durbin R.M."/>
            <person name="Hubbard T."/>
            <person name="Doucette-Stamm L."/>
            <person name="Beck S."/>
            <person name="Smith D.R."/>
            <person name="Rogers J."/>
        </authorList>
    </citation>
    <scope>NUCLEOTIDE SEQUENCE [LARGE SCALE GENOMIC DNA]</scope>
</reference>
<reference key="3">
    <citation type="submission" date="2005-09" db="EMBL/GenBank/DDBJ databases">
        <authorList>
            <person name="Mural R.J."/>
            <person name="Istrail S."/>
            <person name="Sutton G.G."/>
            <person name="Florea L."/>
            <person name="Halpern A.L."/>
            <person name="Mobarry C.M."/>
            <person name="Lippert R."/>
            <person name="Walenz B."/>
            <person name="Shatkay H."/>
            <person name="Dew I."/>
            <person name="Miller J.R."/>
            <person name="Flanigan M.J."/>
            <person name="Edwards N.J."/>
            <person name="Bolanos R."/>
            <person name="Fasulo D."/>
            <person name="Halldorsson B.V."/>
            <person name="Hannenhalli S."/>
            <person name="Turner R."/>
            <person name="Yooseph S."/>
            <person name="Lu F."/>
            <person name="Nusskern D.R."/>
            <person name="Shue B.C."/>
            <person name="Zheng X.H."/>
            <person name="Zhong F."/>
            <person name="Delcher A.L."/>
            <person name="Huson D.H."/>
            <person name="Kravitz S.A."/>
            <person name="Mouchard L."/>
            <person name="Reinert K."/>
            <person name="Remington K.A."/>
            <person name="Clark A.G."/>
            <person name="Waterman M.S."/>
            <person name="Eichler E.E."/>
            <person name="Adams M.D."/>
            <person name="Hunkapiller M.W."/>
            <person name="Myers E.W."/>
            <person name="Venter J.C."/>
        </authorList>
    </citation>
    <scope>NUCLEOTIDE SEQUENCE [LARGE SCALE GENOMIC DNA]</scope>
</reference>
<reference key="4">
    <citation type="journal article" date="2004" name="Genome Res.">
        <title>The status, quality, and expansion of the NIH full-length cDNA project: the Mammalian Gene Collection (MGC).</title>
        <authorList>
            <consortium name="The MGC Project Team"/>
        </authorList>
    </citation>
    <scope>NUCLEOTIDE SEQUENCE [LARGE SCALE MRNA] (ISOFORM 1)</scope>
    <source>
        <tissue>Brain</tissue>
    </source>
</reference>
<reference key="5">
    <citation type="journal article" date="1984" name="J. Natl. Cancer Inst.">
        <title>Thioesterase II, a new marker enzyme for human cells of breast epithelial origin.</title>
        <authorList>
            <person name="Smith S."/>
            <person name="Pasco D."/>
            <person name="Pawlak J."/>
            <person name="Thompson B.J."/>
            <person name="Stampfer M."/>
            <person name="Nandi S."/>
        </authorList>
    </citation>
    <scope>TISSUE SPECIFICITY</scope>
</reference>
<reference key="6">
    <citation type="journal article" date="2006" name="DNA Res.">
        <title>Isolation and expression profiling of genes upregulated in bone marrow-derived mononuclear cells of rheumatoid arthritis patients.</title>
        <authorList>
            <person name="Nakamura N."/>
            <person name="Shimaoka Y."/>
            <person name="Tougan T."/>
            <person name="Onda H."/>
            <person name="Okuzaki D."/>
            <person name="Zhao H."/>
            <person name="Fujimori A."/>
            <person name="Yabuta N."/>
            <person name="Nagamori I."/>
            <person name="Tanigawa A."/>
            <person name="Sato J."/>
            <person name="Oda T."/>
            <person name="Hayashida K."/>
            <person name="Suzuki R."/>
            <person name="Yukioka M."/>
            <person name="Nojima H."/>
            <person name="Ochi T."/>
        </authorList>
    </citation>
    <scope>TISSUE SPECIFICITY (ISOFORM 2)</scope>
</reference>
<reference evidence="10" key="7">
    <citation type="journal article" date="2016" name="J. Biol. Chem.">
        <title>Crystal Structure and Substrate Specificity of Human Thioesterase 2: insights into the molecular basis for the modulation of fatty acid synthase.</title>
        <authorList>
            <person name="Ritchie M.K."/>
            <person name="Johnson L.C."/>
            <person name="Clodfelter J.E."/>
            <person name="Pemble C.W. IV"/>
            <person name="Fulp B.E."/>
            <person name="Furdui C.M."/>
            <person name="Kridel S.J."/>
            <person name="Lowther W.T."/>
        </authorList>
    </citation>
    <scope>X-RAY CRYSTALLOGRAPHY (2.80 ANGSTROMS)</scope>
    <scope>CATALYTIC ACTIVITY</scope>
    <scope>FUNCTION</scope>
    <scope>ACTIVE SITE</scope>
</reference>
<feature type="chain" id="PRO_0000180358" description="S-acyl fatty acid synthase thioesterase, medium chain">
    <location>
        <begin position="1"/>
        <end position="265"/>
    </location>
</feature>
<feature type="active site" evidence="8">
    <location>
        <position position="101"/>
    </location>
</feature>
<feature type="active site" evidence="1">
    <location>
        <position position="237"/>
    </location>
</feature>
<feature type="modified residue" description="N-acetylmethionine" evidence="1">
    <location>
        <position position="1"/>
    </location>
</feature>
<feature type="splice variant" id="VSP_040022" description="In isoform 2." evidence="5">
    <original>V</original>
    <variation>ETASHHVAKAGLKLRRSSDPPASAYPCAGVSHRRREPPCLAKILGLFWILIFFM</variation>
    <location>
        <position position="55"/>
    </location>
</feature>
<feature type="strand" evidence="11">
    <location>
        <begin position="27"/>
        <end position="32"/>
    </location>
</feature>
<feature type="strand" evidence="11">
    <location>
        <begin position="47"/>
        <end position="51"/>
    </location>
</feature>
<feature type="helix" evidence="11">
    <location>
        <begin position="79"/>
        <end position="83"/>
    </location>
</feature>
<feature type="helix" evidence="11">
    <location>
        <begin position="87"/>
        <end position="90"/>
    </location>
</feature>
<feature type="strand" evidence="11">
    <location>
        <begin position="95"/>
        <end position="100"/>
    </location>
</feature>
<feature type="helix" evidence="11">
    <location>
        <begin position="102"/>
        <end position="116"/>
    </location>
</feature>
<feature type="strand" evidence="11">
    <location>
        <begin position="123"/>
        <end position="129"/>
    </location>
</feature>
<feature type="strand" evidence="11">
    <location>
        <begin position="133"/>
        <end position="135"/>
    </location>
</feature>
<feature type="helix" evidence="11">
    <location>
        <begin position="144"/>
        <end position="146"/>
    </location>
</feature>
<feature type="helix" evidence="11">
    <location>
        <begin position="149"/>
        <end position="157"/>
    </location>
</feature>
<feature type="helix" evidence="11">
    <location>
        <begin position="173"/>
        <end position="190"/>
    </location>
</feature>
<feature type="strand" evidence="11">
    <location>
        <begin position="202"/>
        <end position="209"/>
    </location>
</feature>
<feature type="helix" evidence="11">
    <location>
        <begin position="217"/>
        <end position="223"/>
    </location>
</feature>
<feature type="strand" evidence="11">
    <location>
        <begin position="224"/>
        <end position="226"/>
    </location>
</feature>
<feature type="strand" evidence="11">
    <location>
        <begin position="228"/>
        <end position="236"/>
    </location>
</feature>
<feature type="helix" evidence="11">
    <location>
        <begin position="239"/>
        <end position="241"/>
    </location>
</feature>
<feature type="helix" evidence="11">
    <location>
        <begin position="243"/>
        <end position="259"/>
    </location>
</feature>
<proteinExistence type="evidence at protein level"/>
<dbReference type="EC" id="3.1.2.14" evidence="3"/>
<dbReference type="EMBL" id="AK001844">
    <property type="protein sequence ID" value="BAA91937.1"/>
    <property type="molecule type" value="mRNA"/>
</dbReference>
<dbReference type="EMBL" id="AK001968">
    <property type="protein sequence ID" value="BAA92007.1"/>
    <property type="molecule type" value="mRNA"/>
</dbReference>
<dbReference type="EMBL" id="AL590365">
    <property type="status" value="NOT_ANNOTATED_CDS"/>
    <property type="molecule type" value="Genomic_DNA"/>
</dbReference>
<dbReference type="EMBL" id="CH471072">
    <property type="protein sequence ID" value="EAW86244.1"/>
    <property type="molecule type" value="Genomic_DNA"/>
</dbReference>
<dbReference type="EMBL" id="CH471072">
    <property type="protein sequence ID" value="EAW86245.1"/>
    <property type="molecule type" value="Genomic_DNA"/>
</dbReference>
<dbReference type="EMBL" id="BC050372">
    <property type="protein sequence ID" value="AAH50372.1"/>
    <property type="molecule type" value="mRNA"/>
</dbReference>
<dbReference type="EMBL" id="BR000403">
    <property type="protein sequence ID" value="FAA00320.1"/>
    <property type="molecule type" value="mRNA"/>
</dbReference>
<dbReference type="CCDS" id="CCDS31152.1">
    <molecule id="Q9NV23-1"/>
</dbReference>
<dbReference type="CCDS" id="CCDS7106.1">
    <molecule id="Q9NV23-2"/>
</dbReference>
<dbReference type="RefSeq" id="NP_001034791.1">
    <molecule id="Q9NV23-1"/>
    <property type="nucleotide sequence ID" value="NM_001039702.3"/>
</dbReference>
<dbReference type="RefSeq" id="NP_060794.1">
    <molecule id="Q9NV23-2"/>
    <property type="nucleotide sequence ID" value="NM_018324.3"/>
</dbReference>
<dbReference type="RefSeq" id="XP_016871865.1">
    <molecule id="Q9NV23-2"/>
    <property type="nucleotide sequence ID" value="XM_017016376.3"/>
</dbReference>
<dbReference type="RefSeq" id="XP_024303828.1">
    <molecule id="Q9NV23-1"/>
    <property type="nucleotide sequence ID" value="XM_024448060.2"/>
</dbReference>
<dbReference type="RefSeq" id="XP_047281379.1">
    <molecule id="Q9NV23-2"/>
    <property type="nucleotide sequence ID" value="XM_047425423.1"/>
</dbReference>
<dbReference type="RefSeq" id="XP_054222181.1">
    <molecule id="Q9NV23-2"/>
    <property type="nucleotide sequence ID" value="XM_054366206.1"/>
</dbReference>
<dbReference type="RefSeq" id="XP_054222182.1">
    <molecule id="Q9NV23-2"/>
    <property type="nucleotide sequence ID" value="XM_054366207.1"/>
</dbReference>
<dbReference type="RefSeq" id="XP_054222183.1">
    <molecule id="Q9NV23-1"/>
    <property type="nucleotide sequence ID" value="XM_054366208.1"/>
</dbReference>
<dbReference type="PDB" id="4XJV">
    <property type="method" value="X-ray"/>
    <property type="resolution" value="2.80 A"/>
    <property type="chains" value="A=1-265"/>
</dbReference>
<dbReference type="PDBsum" id="4XJV"/>
<dbReference type="SMR" id="Q9NV23"/>
<dbReference type="BioGRID" id="120588">
    <property type="interactions" value="1"/>
</dbReference>
<dbReference type="FunCoup" id="Q9NV23">
    <property type="interactions" value="71"/>
</dbReference>
<dbReference type="STRING" id="9606.ENSP00000367462"/>
<dbReference type="ESTHER" id="human-OLAH">
    <property type="family name" value="Thioesterase"/>
</dbReference>
<dbReference type="iPTMnet" id="Q9NV23"/>
<dbReference type="PhosphoSitePlus" id="Q9NV23"/>
<dbReference type="BioMuta" id="OLAH"/>
<dbReference type="DMDM" id="52783423"/>
<dbReference type="MassIVE" id="Q9NV23"/>
<dbReference type="PeptideAtlas" id="Q9NV23"/>
<dbReference type="ProteomicsDB" id="82739">
    <molecule id="Q9NV23-1"/>
</dbReference>
<dbReference type="ProteomicsDB" id="82740">
    <molecule id="Q9NV23-2"/>
</dbReference>
<dbReference type="Antibodypedia" id="4213">
    <property type="antibodies" value="49 antibodies from 14 providers"/>
</dbReference>
<dbReference type="DNASU" id="55301"/>
<dbReference type="Ensembl" id="ENST00000378217.3">
    <molecule id="Q9NV23-2"/>
    <property type="protein sequence ID" value="ENSP00000367462.3"/>
    <property type="gene ID" value="ENSG00000152463.15"/>
</dbReference>
<dbReference type="Ensembl" id="ENST00000378228.8">
    <molecule id="Q9NV23-1"/>
    <property type="protein sequence ID" value="ENSP00000367473.4"/>
    <property type="gene ID" value="ENSG00000152463.15"/>
</dbReference>
<dbReference type="GeneID" id="55301"/>
<dbReference type="KEGG" id="hsa:55301"/>
<dbReference type="MANE-Select" id="ENST00000378228.8">
    <property type="protein sequence ID" value="ENSP00000367473.4"/>
    <property type="RefSeq nucleotide sequence ID" value="NM_001039702.3"/>
    <property type="RefSeq protein sequence ID" value="NP_001034791.1"/>
</dbReference>
<dbReference type="UCSC" id="uc001int.3">
    <molecule id="Q9NV23-1"/>
    <property type="organism name" value="human"/>
</dbReference>
<dbReference type="AGR" id="HGNC:25625"/>
<dbReference type="CTD" id="55301"/>
<dbReference type="DisGeNET" id="55301"/>
<dbReference type="GeneCards" id="OLAH"/>
<dbReference type="HGNC" id="HGNC:25625">
    <property type="gene designation" value="OLAH"/>
</dbReference>
<dbReference type="HPA" id="ENSG00000152463">
    <property type="expression patterns" value="Tissue enhanced (lymphoid tissue, testis)"/>
</dbReference>
<dbReference type="neXtProt" id="NX_Q9NV23"/>
<dbReference type="OpenTargets" id="ENSG00000152463"/>
<dbReference type="PharmGKB" id="PA134955731"/>
<dbReference type="VEuPathDB" id="HostDB:ENSG00000152463"/>
<dbReference type="GeneTree" id="ENSGT00390000015518"/>
<dbReference type="HOGENOM" id="CLU_070456_3_0_1"/>
<dbReference type="InParanoid" id="Q9NV23"/>
<dbReference type="OMA" id="PGHGTNQ"/>
<dbReference type="OrthoDB" id="541883at2759"/>
<dbReference type="PAN-GO" id="Q9NV23">
    <property type="GO annotations" value="1 GO annotation based on evolutionary models"/>
</dbReference>
<dbReference type="PhylomeDB" id="Q9NV23"/>
<dbReference type="TreeFam" id="TF331555"/>
<dbReference type="BioCyc" id="MetaCyc:HS07821-MONOMER"/>
<dbReference type="PathwayCommons" id="Q9NV23"/>
<dbReference type="Reactome" id="R-HSA-75105">
    <property type="pathway name" value="Fatty acyl-CoA biosynthesis"/>
</dbReference>
<dbReference type="BioGRID-ORCS" id="55301">
    <property type="hits" value="11 hits in 1152 CRISPR screens"/>
</dbReference>
<dbReference type="ChiTaRS" id="OLAH">
    <property type="organism name" value="human"/>
</dbReference>
<dbReference type="EvolutionaryTrace" id="Q9NV23"/>
<dbReference type="GenomeRNAi" id="55301"/>
<dbReference type="Pharos" id="Q9NV23">
    <property type="development level" value="Tbio"/>
</dbReference>
<dbReference type="PRO" id="PR:Q9NV23"/>
<dbReference type="Proteomes" id="UP000005640">
    <property type="component" value="Chromosome 10"/>
</dbReference>
<dbReference type="RNAct" id="Q9NV23">
    <property type="molecule type" value="protein"/>
</dbReference>
<dbReference type="Bgee" id="ENSG00000152463">
    <property type="expression patterns" value="Expressed in right testis and 120 other cell types or tissues"/>
</dbReference>
<dbReference type="ExpressionAtlas" id="Q9NV23">
    <property type="expression patterns" value="baseline and differential"/>
</dbReference>
<dbReference type="GO" id="GO:0005829">
    <property type="term" value="C:cytosol"/>
    <property type="evidence" value="ECO:0000250"/>
    <property type="project" value="UniProtKB"/>
</dbReference>
<dbReference type="GO" id="GO:0016297">
    <property type="term" value="F:fatty acyl-[ACP] hydrolase activity"/>
    <property type="evidence" value="ECO:0000314"/>
    <property type="project" value="UniProtKB"/>
</dbReference>
<dbReference type="GO" id="GO:0008610">
    <property type="term" value="P:lipid biosynthetic process"/>
    <property type="evidence" value="ECO:0000318"/>
    <property type="project" value="GO_Central"/>
</dbReference>
<dbReference type="GO" id="GO:0051792">
    <property type="term" value="P:medium-chain fatty acid biosynthetic process"/>
    <property type="evidence" value="ECO:0000314"/>
    <property type="project" value="UniProtKB"/>
</dbReference>
<dbReference type="DisProt" id="DP02795"/>
<dbReference type="FunFam" id="3.40.50.1820:FF:000153">
    <property type="entry name" value="Surfactin synthase thioesterase subunit"/>
    <property type="match status" value="1"/>
</dbReference>
<dbReference type="Gene3D" id="3.40.50.1820">
    <property type="entry name" value="alpha/beta hydrolase"/>
    <property type="match status" value="1"/>
</dbReference>
<dbReference type="InterPro" id="IPR029058">
    <property type="entry name" value="AB_hydrolase_fold"/>
</dbReference>
<dbReference type="InterPro" id="IPR012223">
    <property type="entry name" value="TEII"/>
</dbReference>
<dbReference type="InterPro" id="IPR001031">
    <property type="entry name" value="Thioesterase"/>
</dbReference>
<dbReference type="PANTHER" id="PTHR11487:SF0">
    <property type="entry name" value="S-ACYL FATTY ACID SYNTHASE THIOESTERASE, MEDIUM CHAIN"/>
    <property type="match status" value="1"/>
</dbReference>
<dbReference type="PANTHER" id="PTHR11487">
    <property type="entry name" value="THIOESTERASE"/>
    <property type="match status" value="1"/>
</dbReference>
<dbReference type="Pfam" id="PF00975">
    <property type="entry name" value="Thioesterase"/>
    <property type="match status" value="1"/>
</dbReference>
<dbReference type="SUPFAM" id="SSF53474">
    <property type="entry name" value="alpha/beta-Hydrolases"/>
    <property type="match status" value="1"/>
</dbReference>
<evidence type="ECO:0000250" key="1">
    <source>
        <dbReference type="UniProtKB" id="P08635"/>
    </source>
</evidence>
<evidence type="ECO:0000269" key="2">
    <source>
    </source>
</evidence>
<evidence type="ECO:0000269" key="3">
    <source>
    </source>
</evidence>
<evidence type="ECO:0000269" key="4">
    <source>
    </source>
</evidence>
<evidence type="ECO:0000303" key="5">
    <source>
    </source>
</evidence>
<evidence type="ECO:0000303" key="6">
    <source>
    </source>
</evidence>
<evidence type="ECO:0000305" key="7"/>
<evidence type="ECO:0000305" key="8">
    <source>
    </source>
</evidence>
<evidence type="ECO:0000312" key="9">
    <source>
        <dbReference type="HGNC" id="HGNC:25625"/>
    </source>
</evidence>
<evidence type="ECO:0007744" key="10">
    <source>
        <dbReference type="PDB" id="4XJV"/>
    </source>
</evidence>
<evidence type="ECO:0007829" key="11">
    <source>
        <dbReference type="PDB" id="4XJV"/>
    </source>
</evidence>
<accession>Q9NV23</accession>
<accession>Q5VUB6</accession>
<accession>Q9NUW1</accession>
<keyword id="KW-0002">3D-structure</keyword>
<keyword id="KW-0007">Acetylation</keyword>
<keyword id="KW-0025">Alternative splicing</keyword>
<keyword id="KW-0963">Cytoplasm</keyword>
<keyword id="KW-0275">Fatty acid biosynthesis</keyword>
<keyword id="KW-0276">Fatty acid metabolism</keyword>
<keyword id="KW-0378">Hydrolase</keyword>
<keyword id="KW-0444">Lipid biosynthesis</keyword>
<keyword id="KW-0443">Lipid metabolism</keyword>
<keyword id="KW-1267">Proteomics identification</keyword>
<keyword id="KW-1185">Reference proteome</keyword>
<gene>
    <name evidence="9" type="primary">OLAH</name>
    <name type="synonym">THEDC1</name>
</gene>
<name>SAST_HUMAN</name>
<organism>
    <name type="scientific">Homo sapiens</name>
    <name type="common">Human</name>
    <dbReference type="NCBI Taxonomy" id="9606"/>
    <lineage>
        <taxon>Eukaryota</taxon>
        <taxon>Metazoa</taxon>
        <taxon>Chordata</taxon>
        <taxon>Craniata</taxon>
        <taxon>Vertebrata</taxon>
        <taxon>Euteleostomi</taxon>
        <taxon>Mammalia</taxon>
        <taxon>Eutheria</taxon>
        <taxon>Euarchontoglires</taxon>
        <taxon>Primates</taxon>
        <taxon>Haplorrhini</taxon>
        <taxon>Catarrhini</taxon>
        <taxon>Hominidae</taxon>
        <taxon>Homo</taxon>
    </lineage>
</organism>
<protein>
    <recommendedName>
        <fullName>S-acyl fatty acid synthase thioesterase, medium chain</fullName>
        <ecNumber evidence="3">3.1.2.14</ecNumber>
    </recommendedName>
    <alternativeName>
        <fullName>Augmented in rheumatoid arthritis 1</fullName>
        <shortName>AURA1</shortName>
    </alternativeName>
    <alternativeName>
        <fullName>Oleoyl-ACP hydrolase</fullName>
    </alternativeName>
    <alternativeName>
        <fullName evidence="6">Thioesterase 2</fullName>
        <shortName evidence="6">TE2</shortName>
    </alternativeName>
    <alternativeName>
        <fullName>Thioesterase II</fullName>
    </alternativeName>
    <alternativeName>
        <fullName>Thioesterase domain-containing protein 1</fullName>
    </alternativeName>
</protein>